<feature type="transit peptide" description="Mitochondrion" evidence="2">
    <location>
        <begin position="1"/>
        <end position="26"/>
    </location>
</feature>
<feature type="chain" id="PRO_0000271289" description="Isocitrate dehydrogenase [NAD] regulatory subunit 3, mitochondrial">
    <location>
        <begin position="27"/>
        <end position="368"/>
    </location>
</feature>
<organism>
    <name type="scientific">Arabidopsis thaliana</name>
    <name type="common">Mouse-ear cress</name>
    <dbReference type="NCBI Taxonomy" id="3702"/>
    <lineage>
        <taxon>Eukaryota</taxon>
        <taxon>Viridiplantae</taxon>
        <taxon>Streptophyta</taxon>
        <taxon>Embryophyta</taxon>
        <taxon>Tracheophyta</taxon>
        <taxon>Spermatophyta</taxon>
        <taxon>Magnoliopsida</taxon>
        <taxon>eudicotyledons</taxon>
        <taxon>Gunneridae</taxon>
        <taxon>Pentapetalae</taxon>
        <taxon>rosids</taxon>
        <taxon>malvids</taxon>
        <taxon>Brassicales</taxon>
        <taxon>Brassicaceae</taxon>
        <taxon>Camelineae</taxon>
        <taxon>Arabidopsis</taxon>
    </lineage>
</organism>
<evidence type="ECO:0000250" key="1">
    <source>
        <dbReference type="UniProtKB" id="P93032"/>
    </source>
</evidence>
<evidence type="ECO:0000255" key="2"/>
<evidence type="ECO:0000269" key="3">
    <source>
    </source>
</evidence>
<evidence type="ECO:0000269" key="4">
    <source>
    </source>
</evidence>
<evidence type="ECO:0000269" key="5">
    <source>
    </source>
</evidence>
<evidence type="ECO:0000305" key="6"/>
<comment type="function">
    <text evidence="1">Performs an essential role in the oxidative function of the citric acid cycle.</text>
</comment>
<comment type="subunit">
    <text evidence="5">Heterooligomer of catalytic and regulatory subunits. Interacts with 14-3-3-like proteins GRF1 GRF3 and GRF8 (PubMed:22104211).</text>
</comment>
<comment type="subcellular location">
    <subcellularLocation>
        <location evidence="3">Mitochondrion</location>
    </subcellularLocation>
</comment>
<comment type="tissue specificity">
    <text evidence="4">Mainly expressed at a low level in pollen.</text>
</comment>
<comment type="similarity">
    <text evidence="6">Belongs to the isocitrate and isopropylmalate dehydrogenases family.</text>
</comment>
<sequence length="368" mass="39957">MARRSVSIFNRLLANPPSPFTSLSRSITYMPRPGDGAPRTVTLIPGDGIGPLVTGAVEQVMEAMHAPVHFERYEVLGNMRKVPEEVIESVKRNKVCLKGGLATPVGGGVSSLNMQLRKELDIFASLVNCINVPGLVTRHENVDIVVIRENTEGEYSGLEHEVVPGVVESLKVITKFCSERIARYAFEYAYLNNRKKVTAVHKANIMKLADGLFLESCREVAKHYSGITYNEIIVDNCCMQLVAKPEQFDVMVTPNLYGNLIANTAAGIAGGTGVMPGGNVGAEHAIFEQGASAGNVGNDKMVEQKKANPVALLLSSAMMLRHLRFPTFADRLETAVKQVIKEGKYRTKDLGGDCTTQEVVDAVIAALE</sequence>
<accession>O81796</accession>
<keyword id="KW-0460">Magnesium</keyword>
<keyword id="KW-0464">Manganese</keyword>
<keyword id="KW-0479">Metal-binding</keyword>
<keyword id="KW-0496">Mitochondrion</keyword>
<keyword id="KW-0520">NAD</keyword>
<keyword id="KW-0560">Oxidoreductase</keyword>
<keyword id="KW-1185">Reference proteome</keyword>
<keyword id="KW-0809">Transit peptide</keyword>
<keyword id="KW-0816">Tricarboxylic acid cycle</keyword>
<protein>
    <recommendedName>
        <fullName>Isocitrate dehydrogenase [NAD] regulatory subunit 3, mitochondrial</fullName>
    </recommendedName>
    <alternativeName>
        <fullName>IDH-III</fullName>
    </alternativeName>
    <alternativeName>
        <fullName>Isocitric dehydrogenase 3</fullName>
    </alternativeName>
    <alternativeName>
        <fullName>NAD(+)-specific ICDH 3</fullName>
    </alternativeName>
</protein>
<proteinExistence type="evidence at protein level"/>
<dbReference type="EMBL" id="AL031135">
    <property type="protein sequence ID" value="CAA20035.1"/>
    <property type="molecule type" value="Genomic_DNA"/>
</dbReference>
<dbReference type="EMBL" id="AL161587">
    <property type="protein sequence ID" value="CAB80281.1"/>
    <property type="molecule type" value="Genomic_DNA"/>
</dbReference>
<dbReference type="EMBL" id="CP002687">
    <property type="protein sequence ID" value="AEE86544.1"/>
    <property type="molecule type" value="Genomic_DNA"/>
</dbReference>
<dbReference type="EMBL" id="BT003922">
    <property type="protein sequence ID" value="AAO41969.1"/>
    <property type="molecule type" value="mRNA"/>
</dbReference>
<dbReference type="EMBL" id="BT006081">
    <property type="protein sequence ID" value="AAP04066.1"/>
    <property type="molecule type" value="mRNA"/>
</dbReference>
<dbReference type="PIR" id="T04670">
    <property type="entry name" value="T04670"/>
</dbReference>
<dbReference type="RefSeq" id="NP_195290.1">
    <property type="nucleotide sequence ID" value="NM_119730.3"/>
</dbReference>
<dbReference type="SMR" id="O81796"/>
<dbReference type="BioGRID" id="14999">
    <property type="interactions" value="3"/>
</dbReference>
<dbReference type="FunCoup" id="O81796">
    <property type="interactions" value="2513"/>
</dbReference>
<dbReference type="STRING" id="3702.O81796"/>
<dbReference type="iPTMnet" id="O81796"/>
<dbReference type="PaxDb" id="3702-AT4G35650.1"/>
<dbReference type="ProteomicsDB" id="248616"/>
<dbReference type="EnsemblPlants" id="AT4G35650.1">
    <property type="protein sequence ID" value="AT4G35650.1"/>
    <property type="gene ID" value="AT4G35650"/>
</dbReference>
<dbReference type="GeneID" id="829717"/>
<dbReference type="Gramene" id="AT4G35650.1">
    <property type="protein sequence ID" value="AT4G35650.1"/>
    <property type="gene ID" value="AT4G35650"/>
</dbReference>
<dbReference type="KEGG" id="ath:AT4G35650"/>
<dbReference type="Araport" id="AT4G35650"/>
<dbReference type="TAIR" id="AT4G35650">
    <property type="gene designation" value="IDH-III"/>
</dbReference>
<dbReference type="eggNOG" id="KOG0784">
    <property type="taxonomic scope" value="Eukaryota"/>
</dbReference>
<dbReference type="HOGENOM" id="CLU_031953_0_1_1"/>
<dbReference type="InParanoid" id="O81796"/>
<dbReference type="OMA" id="PWSCDYY"/>
<dbReference type="PhylomeDB" id="O81796"/>
<dbReference type="BRENDA" id="1.1.1.41">
    <property type="organism ID" value="399"/>
</dbReference>
<dbReference type="PRO" id="PR:O81796"/>
<dbReference type="Proteomes" id="UP000006548">
    <property type="component" value="Chromosome 4"/>
</dbReference>
<dbReference type="ExpressionAtlas" id="O81796">
    <property type="expression patterns" value="baseline and differential"/>
</dbReference>
<dbReference type="GO" id="GO:0005829">
    <property type="term" value="C:cytosol"/>
    <property type="evidence" value="ECO:0007005"/>
    <property type="project" value="TAIR"/>
</dbReference>
<dbReference type="GO" id="GO:0005739">
    <property type="term" value="C:mitochondrion"/>
    <property type="evidence" value="ECO:0007005"/>
    <property type="project" value="TAIR"/>
</dbReference>
<dbReference type="GO" id="GO:0004449">
    <property type="term" value="F:isocitrate dehydrogenase (NAD+) activity"/>
    <property type="evidence" value="ECO:0000316"/>
    <property type="project" value="TAIR"/>
</dbReference>
<dbReference type="GO" id="GO:0046872">
    <property type="term" value="F:metal ion binding"/>
    <property type="evidence" value="ECO:0007669"/>
    <property type="project" value="UniProtKB-KW"/>
</dbReference>
<dbReference type="GO" id="GO:0006102">
    <property type="term" value="P:isocitrate metabolic process"/>
    <property type="evidence" value="ECO:0000316"/>
    <property type="project" value="TAIR"/>
</dbReference>
<dbReference type="GO" id="GO:0006099">
    <property type="term" value="P:tricarboxylic acid cycle"/>
    <property type="evidence" value="ECO:0000304"/>
    <property type="project" value="TAIR"/>
</dbReference>
<dbReference type="FunFam" id="3.40.718.10:FF:000009">
    <property type="entry name" value="Isocitrate dehydrogenase [NAD] regulatory subunit 1"/>
    <property type="match status" value="1"/>
</dbReference>
<dbReference type="Gene3D" id="3.40.718.10">
    <property type="entry name" value="Isopropylmalate Dehydrogenase"/>
    <property type="match status" value="1"/>
</dbReference>
<dbReference type="InterPro" id="IPR004434">
    <property type="entry name" value="Isocitrate_DH_NAD"/>
</dbReference>
<dbReference type="InterPro" id="IPR024084">
    <property type="entry name" value="IsoPropMal-DH-like_dom"/>
</dbReference>
<dbReference type="NCBIfam" id="TIGR00175">
    <property type="entry name" value="mito_nad_idh"/>
    <property type="match status" value="1"/>
</dbReference>
<dbReference type="PANTHER" id="PTHR11835">
    <property type="entry name" value="DECARBOXYLATING DEHYDROGENASES-ISOCITRATE, ISOPROPYLMALATE, TARTRATE"/>
    <property type="match status" value="1"/>
</dbReference>
<dbReference type="PANTHER" id="PTHR11835:SF79">
    <property type="entry name" value="ISOCITRATE DEHYDROGENASE [NAD] REGULATORY SUBUNIT 3, MITOCHONDRIAL"/>
    <property type="match status" value="1"/>
</dbReference>
<dbReference type="Pfam" id="PF00180">
    <property type="entry name" value="Iso_dh"/>
    <property type="match status" value="1"/>
</dbReference>
<dbReference type="SMART" id="SM01329">
    <property type="entry name" value="Iso_dh"/>
    <property type="match status" value="1"/>
</dbReference>
<dbReference type="SUPFAM" id="SSF53659">
    <property type="entry name" value="Isocitrate/Isopropylmalate dehydrogenase-like"/>
    <property type="match status" value="1"/>
</dbReference>
<gene>
    <name type="primary">IDH3</name>
    <name type="ordered locus">At4g35650</name>
    <name type="ORF">F8D20.160</name>
</gene>
<reference key="1">
    <citation type="journal article" date="1999" name="Nature">
        <title>Sequence and analysis of chromosome 4 of the plant Arabidopsis thaliana.</title>
        <authorList>
            <person name="Mayer K.F.X."/>
            <person name="Schueller C."/>
            <person name="Wambutt R."/>
            <person name="Murphy G."/>
            <person name="Volckaert G."/>
            <person name="Pohl T."/>
            <person name="Duesterhoeft A."/>
            <person name="Stiekema W."/>
            <person name="Entian K.-D."/>
            <person name="Terryn N."/>
            <person name="Harris B."/>
            <person name="Ansorge W."/>
            <person name="Brandt P."/>
            <person name="Grivell L.A."/>
            <person name="Rieger M."/>
            <person name="Weichselgartner M."/>
            <person name="de Simone V."/>
            <person name="Obermaier B."/>
            <person name="Mache R."/>
            <person name="Mueller M."/>
            <person name="Kreis M."/>
            <person name="Delseny M."/>
            <person name="Puigdomenech P."/>
            <person name="Watson M."/>
            <person name="Schmidtheini T."/>
            <person name="Reichert B."/>
            <person name="Portetelle D."/>
            <person name="Perez-Alonso M."/>
            <person name="Boutry M."/>
            <person name="Bancroft I."/>
            <person name="Vos P."/>
            <person name="Hoheisel J."/>
            <person name="Zimmermann W."/>
            <person name="Wedler H."/>
            <person name="Ridley P."/>
            <person name="Langham S.-A."/>
            <person name="McCullagh B."/>
            <person name="Bilham L."/>
            <person name="Robben J."/>
            <person name="van der Schueren J."/>
            <person name="Grymonprez B."/>
            <person name="Chuang Y.-J."/>
            <person name="Vandenbussche F."/>
            <person name="Braeken M."/>
            <person name="Weltjens I."/>
            <person name="Voet M."/>
            <person name="Bastiaens I."/>
            <person name="Aert R."/>
            <person name="Defoor E."/>
            <person name="Weitzenegger T."/>
            <person name="Bothe G."/>
            <person name="Ramsperger U."/>
            <person name="Hilbert H."/>
            <person name="Braun M."/>
            <person name="Holzer E."/>
            <person name="Brandt A."/>
            <person name="Peters S."/>
            <person name="van Staveren M."/>
            <person name="Dirkse W."/>
            <person name="Mooijman P."/>
            <person name="Klein Lankhorst R."/>
            <person name="Rose M."/>
            <person name="Hauf J."/>
            <person name="Koetter P."/>
            <person name="Berneiser S."/>
            <person name="Hempel S."/>
            <person name="Feldpausch M."/>
            <person name="Lamberth S."/>
            <person name="Van den Daele H."/>
            <person name="De Keyser A."/>
            <person name="Buysshaert C."/>
            <person name="Gielen J."/>
            <person name="Villarroel R."/>
            <person name="De Clercq R."/>
            <person name="van Montagu M."/>
            <person name="Rogers J."/>
            <person name="Cronin A."/>
            <person name="Quail M.A."/>
            <person name="Bray-Allen S."/>
            <person name="Clark L."/>
            <person name="Doggett J."/>
            <person name="Hall S."/>
            <person name="Kay M."/>
            <person name="Lennard N."/>
            <person name="McLay K."/>
            <person name="Mayes R."/>
            <person name="Pettett A."/>
            <person name="Rajandream M.A."/>
            <person name="Lyne M."/>
            <person name="Benes V."/>
            <person name="Rechmann S."/>
            <person name="Borkova D."/>
            <person name="Bloecker H."/>
            <person name="Scharfe M."/>
            <person name="Grimm M."/>
            <person name="Loehnert T.-H."/>
            <person name="Dose S."/>
            <person name="de Haan M."/>
            <person name="Maarse A.C."/>
            <person name="Schaefer M."/>
            <person name="Mueller-Auer S."/>
            <person name="Gabel C."/>
            <person name="Fuchs M."/>
            <person name="Fartmann B."/>
            <person name="Granderath K."/>
            <person name="Dauner D."/>
            <person name="Herzl A."/>
            <person name="Neumann S."/>
            <person name="Argiriou A."/>
            <person name="Vitale D."/>
            <person name="Liguori R."/>
            <person name="Piravandi E."/>
            <person name="Massenet O."/>
            <person name="Quigley F."/>
            <person name="Clabauld G."/>
            <person name="Muendlein A."/>
            <person name="Felber R."/>
            <person name="Schnabl S."/>
            <person name="Hiller R."/>
            <person name="Schmidt W."/>
            <person name="Lecharny A."/>
            <person name="Aubourg S."/>
            <person name="Chefdor F."/>
            <person name="Cooke R."/>
            <person name="Berger C."/>
            <person name="Monfort A."/>
            <person name="Casacuberta E."/>
            <person name="Gibbons T."/>
            <person name="Weber N."/>
            <person name="Vandenbol M."/>
            <person name="Bargues M."/>
            <person name="Terol J."/>
            <person name="Torres A."/>
            <person name="Perez-Perez A."/>
            <person name="Purnelle B."/>
            <person name="Bent E."/>
            <person name="Johnson S."/>
            <person name="Tacon D."/>
            <person name="Jesse T."/>
            <person name="Heijnen L."/>
            <person name="Schwarz S."/>
            <person name="Scholler P."/>
            <person name="Heber S."/>
            <person name="Francs P."/>
            <person name="Bielke C."/>
            <person name="Frishman D."/>
            <person name="Haase D."/>
            <person name="Lemcke K."/>
            <person name="Mewes H.-W."/>
            <person name="Stocker S."/>
            <person name="Zaccaria P."/>
            <person name="Bevan M."/>
            <person name="Wilson R.K."/>
            <person name="de la Bastide M."/>
            <person name="Habermann K."/>
            <person name="Parnell L."/>
            <person name="Dedhia N."/>
            <person name="Gnoj L."/>
            <person name="Schutz K."/>
            <person name="Huang E."/>
            <person name="Spiegel L."/>
            <person name="Sekhon M."/>
            <person name="Murray J."/>
            <person name="Sheet P."/>
            <person name="Cordes M."/>
            <person name="Abu-Threideh J."/>
            <person name="Stoneking T."/>
            <person name="Kalicki J."/>
            <person name="Graves T."/>
            <person name="Harmon G."/>
            <person name="Edwards J."/>
            <person name="Latreille P."/>
            <person name="Courtney L."/>
            <person name="Cloud J."/>
            <person name="Abbott A."/>
            <person name="Scott K."/>
            <person name="Johnson D."/>
            <person name="Minx P."/>
            <person name="Bentley D."/>
            <person name="Fulton B."/>
            <person name="Miller N."/>
            <person name="Greco T."/>
            <person name="Kemp K."/>
            <person name="Kramer J."/>
            <person name="Fulton L."/>
            <person name="Mardis E."/>
            <person name="Dante M."/>
            <person name="Pepin K."/>
            <person name="Hillier L.W."/>
            <person name="Nelson J."/>
            <person name="Spieth J."/>
            <person name="Ryan E."/>
            <person name="Andrews S."/>
            <person name="Geisel C."/>
            <person name="Layman D."/>
            <person name="Du H."/>
            <person name="Ali J."/>
            <person name="Berghoff A."/>
            <person name="Jones K."/>
            <person name="Drone K."/>
            <person name="Cotton M."/>
            <person name="Joshu C."/>
            <person name="Antonoiu B."/>
            <person name="Zidanic M."/>
            <person name="Strong C."/>
            <person name="Sun H."/>
            <person name="Lamar B."/>
            <person name="Yordan C."/>
            <person name="Ma P."/>
            <person name="Zhong J."/>
            <person name="Preston R."/>
            <person name="Vil D."/>
            <person name="Shekher M."/>
            <person name="Matero A."/>
            <person name="Shah R."/>
            <person name="Swaby I.K."/>
            <person name="O'Shaughnessy A."/>
            <person name="Rodriguez M."/>
            <person name="Hoffman J."/>
            <person name="Till S."/>
            <person name="Granat S."/>
            <person name="Shohdy N."/>
            <person name="Hasegawa A."/>
            <person name="Hameed A."/>
            <person name="Lodhi M."/>
            <person name="Johnson A."/>
            <person name="Chen E."/>
            <person name="Marra M.A."/>
            <person name="Martienssen R."/>
            <person name="McCombie W.R."/>
        </authorList>
    </citation>
    <scope>NUCLEOTIDE SEQUENCE [LARGE SCALE GENOMIC DNA]</scope>
    <source>
        <strain>cv. Columbia</strain>
    </source>
</reference>
<reference key="2">
    <citation type="journal article" date="2017" name="Plant J.">
        <title>Araport11: a complete reannotation of the Arabidopsis thaliana reference genome.</title>
        <authorList>
            <person name="Cheng C.Y."/>
            <person name="Krishnakumar V."/>
            <person name="Chan A.P."/>
            <person name="Thibaud-Nissen F."/>
            <person name="Schobel S."/>
            <person name="Town C.D."/>
        </authorList>
    </citation>
    <scope>GENOME REANNOTATION</scope>
    <source>
        <strain>cv. Columbia</strain>
    </source>
</reference>
<reference key="3">
    <citation type="journal article" date="2003" name="Science">
        <title>Empirical analysis of transcriptional activity in the Arabidopsis genome.</title>
        <authorList>
            <person name="Yamada K."/>
            <person name="Lim J."/>
            <person name="Dale J.M."/>
            <person name="Chen H."/>
            <person name="Shinn P."/>
            <person name="Palm C.J."/>
            <person name="Southwick A.M."/>
            <person name="Wu H.C."/>
            <person name="Kim C.J."/>
            <person name="Nguyen M."/>
            <person name="Pham P.K."/>
            <person name="Cheuk R.F."/>
            <person name="Karlin-Newmann G."/>
            <person name="Liu S.X."/>
            <person name="Lam B."/>
            <person name="Sakano H."/>
            <person name="Wu T."/>
            <person name="Yu G."/>
            <person name="Miranda M."/>
            <person name="Quach H.L."/>
            <person name="Tripp M."/>
            <person name="Chang C.H."/>
            <person name="Lee J.M."/>
            <person name="Toriumi M.J."/>
            <person name="Chan M.M."/>
            <person name="Tang C.C."/>
            <person name="Onodera C.S."/>
            <person name="Deng J.M."/>
            <person name="Akiyama K."/>
            <person name="Ansari Y."/>
            <person name="Arakawa T."/>
            <person name="Banh J."/>
            <person name="Banno F."/>
            <person name="Bowser L."/>
            <person name="Brooks S.Y."/>
            <person name="Carninci P."/>
            <person name="Chao Q."/>
            <person name="Choy N."/>
            <person name="Enju A."/>
            <person name="Goldsmith A.D."/>
            <person name="Gurjal M."/>
            <person name="Hansen N.F."/>
            <person name="Hayashizaki Y."/>
            <person name="Johnson-Hopson C."/>
            <person name="Hsuan V.W."/>
            <person name="Iida K."/>
            <person name="Karnes M."/>
            <person name="Khan S."/>
            <person name="Koesema E."/>
            <person name="Ishida J."/>
            <person name="Jiang P.X."/>
            <person name="Jones T."/>
            <person name="Kawai J."/>
            <person name="Kamiya A."/>
            <person name="Meyers C."/>
            <person name="Nakajima M."/>
            <person name="Narusaka M."/>
            <person name="Seki M."/>
            <person name="Sakurai T."/>
            <person name="Satou M."/>
            <person name="Tamse R."/>
            <person name="Vaysberg M."/>
            <person name="Wallender E.K."/>
            <person name="Wong C."/>
            <person name="Yamamura Y."/>
            <person name="Yuan S."/>
            <person name="Shinozaki K."/>
            <person name="Davis R.W."/>
            <person name="Theologis A."/>
            <person name="Ecker J.R."/>
        </authorList>
    </citation>
    <scope>NUCLEOTIDE SEQUENCE [LARGE SCALE MRNA]</scope>
    <source>
        <strain>cv. Columbia</strain>
    </source>
</reference>
<reference key="4">
    <citation type="journal article" date="2004" name="Plant Cell">
        <title>Experimental analysis of the Arabidopsis mitochondrial proteome highlights signaling and regulatory components, provides assessment of targeting prediction programs, and indicates plant-specific mitochondrial proteins.</title>
        <authorList>
            <person name="Heazlewood J.L."/>
            <person name="Tonti-Filippini J.S."/>
            <person name="Gout A.M."/>
            <person name="Day D.A."/>
            <person name="Whelan J."/>
            <person name="Millar A.H."/>
        </authorList>
    </citation>
    <scope>IDENTIFICATION BY MASS SPECTROMETRY</scope>
    <scope>SUBCELLULAR LOCATION [LARGE SCALE ANALYSIS]</scope>
    <source>
        <strain>cv. Landsberg erecta</strain>
    </source>
</reference>
<reference key="5">
    <citation type="journal article" date="2004" name="Plant Sci.">
        <title>Characterization of a mutation in the IDH-II subunit of the NAD(+)-dependent isocitrate dehydrogenase from Arabidopsis thaliana.</title>
        <authorList>
            <person name="Lin M."/>
            <person name="Behal R.H."/>
            <person name="Oliver D.J."/>
        </authorList>
        <dbReference type="AGRICOLA" id="IND43633651"/>
    </citation>
    <scope>GENE FAMILY</scope>
</reference>
<reference key="6">
    <citation type="journal article" date="2006" name="Plant Cell Physiol.">
        <title>Expression analysis of Arabidopsis thaliana NAD-dependent isocitrate dehydrogenase genes shows the presence of a functional subunit that is mainly expressed in the pollen and absent from vegetative organs.</title>
        <authorList>
            <person name="Lemaitre T."/>
            <person name="Hodges M."/>
        </authorList>
    </citation>
    <scope>TISSUE SPECIFICITY</scope>
</reference>
<reference key="7">
    <citation type="journal article" date="2011" name="BMC Syst. Biol.">
        <title>Determining novel functions of Arabidopsis 14-3-3 proteins in central metabolic processes.</title>
        <authorList>
            <person name="Diaz C."/>
            <person name="Kusano M."/>
            <person name="Sulpice R."/>
            <person name="Araki M."/>
            <person name="Redestig H."/>
            <person name="Saito K."/>
            <person name="Stitt M."/>
            <person name="Shin R."/>
        </authorList>
    </citation>
    <scope>INTERACTION WITH GRF1; GRF3 AND GRF8</scope>
</reference>
<name>IDH3_ARATH</name>